<organism>
    <name type="scientific">Cerastes cerastes</name>
    <name type="common">Horned desert viper</name>
    <dbReference type="NCBI Taxonomy" id="8697"/>
    <lineage>
        <taxon>Eukaryota</taxon>
        <taxon>Metazoa</taxon>
        <taxon>Chordata</taxon>
        <taxon>Craniata</taxon>
        <taxon>Vertebrata</taxon>
        <taxon>Euteleostomi</taxon>
        <taxon>Lepidosauria</taxon>
        <taxon>Squamata</taxon>
        <taxon>Bifurcata</taxon>
        <taxon>Unidentata</taxon>
        <taxon>Episquamata</taxon>
        <taxon>Toxicofera</taxon>
        <taxon>Serpentes</taxon>
        <taxon>Colubroidea</taxon>
        <taxon>Viperidae</taxon>
        <taxon>Viperinae</taxon>
        <taxon>Cerastes</taxon>
    </lineage>
</organism>
<accession>A3QVN5</accession>
<sequence>MYHIWIKFLAAWIFLKRFNGVHVMQAKAPMYRNEPFLVFWNAPTTQCRLRYKVDLDLKTFHIVSNANDSLSGSAVTIFYPNHLGVYPHIDDRGHFFHGIIPQNESLTKHLNKSKSDINRIIPLKAFHGLGVIDWENWRPQWDRNWGSKNVYRNRSIQFARDLHPELSEDKIRRLAKKEYEKAAKSFMRDTLLLAEEMRPDGYWGYYLYPDCQNYDYKTKGDQYTGKCPEIEMSRNDQLLWLWRDSTALFPNVYLEIILRSSDNALKFVHHRLKEAMRIASMAREDYALPVFAYARPFYAYTFEPLTQEDLVTTVGETAAMGAAGIVFWGSVQYASTVDSCQKVKKYMNGPLGRYIVNVTTAAKICSRVLCRKNGRCVRKHSDSNAFLHLFPESFRIMVYANATEKKVIVKGKLELENLIYLRENFMCQCYQGWKGLYCEEYSIKDIRKI</sequence>
<name>HYAL4_CERCE</name>
<feature type="signal peptide" evidence="1">
    <location>
        <begin position="1"/>
        <end position="23"/>
    </location>
</feature>
<feature type="chain" id="PRO_0000420460" description="Hyaluronidase-4">
    <location>
        <begin position="24"/>
        <end position="449"/>
    </location>
</feature>
<feature type="domain" description="EGF-like">
    <location>
        <begin position="427"/>
        <end position="438"/>
    </location>
</feature>
<feature type="active site" description="Proton donor" evidence="1">
    <location>
        <position position="135"/>
    </location>
</feature>
<feature type="glycosylation site" description="N-linked (GlcNAc...) asparagine" evidence="2">
    <location>
        <position position="67"/>
    </location>
</feature>
<feature type="glycosylation site" description="N-linked (GlcNAc...) asparagine" evidence="2">
    <location>
        <position position="103"/>
    </location>
</feature>
<feature type="glycosylation site" description="N-linked (GlcNAc...) asparagine" evidence="2">
    <location>
        <position position="111"/>
    </location>
</feature>
<feature type="glycosylation site" description="N-linked (GlcNAc...) asparagine" evidence="2">
    <location>
        <position position="153"/>
    </location>
</feature>
<feature type="glycosylation site" description="N-linked (GlcNAc...) asparagine" evidence="2">
    <location>
        <position position="357"/>
    </location>
</feature>
<feature type="glycosylation site" description="N-linked (GlcNAc...) asparagine" evidence="2">
    <location>
        <position position="401"/>
    </location>
</feature>
<feature type="disulfide bond" evidence="1">
    <location>
        <begin position="47"/>
        <end position="340"/>
    </location>
</feature>
<feature type="disulfide bond" evidence="1">
    <location>
        <begin position="211"/>
        <end position="227"/>
    </location>
</feature>
<feature type="disulfide bond" evidence="1">
    <location>
        <begin position="365"/>
        <end position="376"/>
    </location>
</feature>
<feature type="disulfide bond" evidence="1">
    <location>
        <begin position="370"/>
        <end position="427"/>
    </location>
</feature>
<feature type="disulfide bond" evidence="1">
    <location>
        <begin position="429"/>
        <end position="438"/>
    </location>
</feature>
<keyword id="KW-1015">Disulfide bond</keyword>
<keyword id="KW-0245">EGF-like domain</keyword>
<keyword id="KW-0325">Glycoprotein</keyword>
<keyword id="KW-0326">Glycosidase</keyword>
<keyword id="KW-0378">Hydrolase</keyword>
<keyword id="KW-0964">Secreted</keyword>
<keyword id="KW-0732">Signal</keyword>
<evidence type="ECO:0000250" key="1"/>
<evidence type="ECO:0000255" key="2"/>
<evidence type="ECO:0000305" key="3"/>
<comment type="function">
    <text evidence="1">Snake venom endo-hyaluronidase that degrades hyaluronan to smaller oligosaccharide fragments. In venom, it is not toxic by itself, but increases the diffusion of other venom proteins by degrading the extracellular matrix. In addition, it displays antiedematogenic activity (By similarity).</text>
</comment>
<comment type="catalytic activity">
    <reaction>
        <text>Random hydrolysis of (1-&gt;4)-linkages between N-acetyl-beta-D-glucosamine and D-glucuronate residues in hyaluronate.</text>
        <dbReference type="EC" id="3.2.1.35"/>
    </reaction>
</comment>
<comment type="subunit">
    <text evidence="1">Monomer.</text>
</comment>
<comment type="subcellular location">
    <subcellularLocation>
        <location evidence="1">Secreted</location>
    </subcellularLocation>
</comment>
<comment type="tissue specificity">
    <text>Expressed by the venom gland.</text>
</comment>
<comment type="similarity">
    <text evidence="3">Belongs to the glycosyl hydrolase 56 family.</text>
</comment>
<protein>
    <recommendedName>
        <fullName>Hyaluronidase-4</fullName>
        <shortName>Hy-4</shortName>
        <ecNumber>3.2.1.35</ecNumber>
    </recommendedName>
    <alternativeName>
        <fullName>Hyaluronoglucosaminidase-4</fullName>
    </alternativeName>
    <alternativeName>
        <fullName>Venom spreading factor</fullName>
    </alternativeName>
</protein>
<proteinExistence type="evidence at transcript level"/>
<dbReference type="EC" id="3.2.1.35"/>
<dbReference type="EMBL" id="DQ840252">
    <property type="protein sequence ID" value="ABI33940.1"/>
    <property type="molecule type" value="mRNA"/>
</dbReference>
<dbReference type="SMR" id="A3QVN5"/>
<dbReference type="GO" id="GO:0031410">
    <property type="term" value="C:cytoplasmic vesicle"/>
    <property type="evidence" value="ECO:0007669"/>
    <property type="project" value="TreeGrafter"/>
</dbReference>
<dbReference type="GO" id="GO:0005576">
    <property type="term" value="C:extracellular region"/>
    <property type="evidence" value="ECO:0007669"/>
    <property type="project" value="UniProtKB-SubCell"/>
</dbReference>
<dbReference type="GO" id="GO:0004415">
    <property type="term" value="F:hyalurononglucosaminidase activity"/>
    <property type="evidence" value="ECO:0007669"/>
    <property type="project" value="UniProtKB-EC"/>
</dbReference>
<dbReference type="GO" id="GO:0005975">
    <property type="term" value="P:carbohydrate metabolic process"/>
    <property type="evidence" value="ECO:0007669"/>
    <property type="project" value="InterPro"/>
</dbReference>
<dbReference type="GO" id="GO:0030214">
    <property type="term" value="P:hyaluronan catabolic process"/>
    <property type="evidence" value="ECO:0007669"/>
    <property type="project" value="TreeGrafter"/>
</dbReference>
<dbReference type="FunFam" id="3.20.20.70:FF:000065">
    <property type="entry name" value="Hyaluronidase"/>
    <property type="match status" value="1"/>
</dbReference>
<dbReference type="Gene3D" id="3.20.20.70">
    <property type="entry name" value="Aldolase class I"/>
    <property type="match status" value="1"/>
</dbReference>
<dbReference type="InterPro" id="IPR013785">
    <property type="entry name" value="Aldolase_TIM"/>
</dbReference>
<dbReference type="InterPro" id="IPR017853">
    <property type="entry name" value="Glycoside_hydrolase_SF"/>
</dbReference>
<dbReference type="InterPro" id="IPR018155">
    <property type="entry name" value="Hyaluronidase"/>
</dbReference>
<dbReference type="PANTHER" id="PTHR11769">
    <property type="entry name" value="HYALURONIDASE"/>
    <property type="match status" value="1"/>
</dbReference>
<dbReference type="PANTHER" id="PTHR11769:SF9">
    <property type="entry name" value="HYALURONIDASE"/>
    <property type="match status" value="1"/>
</dbReference>
<dbReference type="Pfam" id="PF01630">
    <property type="entry name" value="Glyco_hydro_56"/>
    <property type="match status" value="1"/>
</dbReference>
<dbReference type="PIRSF" id="PIRSF038193">
    <property type="entry name" value="Hyaluronidase"/>
    <property type="match status" value="1"/>
</dbReference>
<dbReference type="PRINTS" id="PR00846">
    <property type="entry name" value="GLHYDRLASE56"/>
</dbReference>
<dbReference type="SUPFAM" id="SSF51445">
    <property type="entry name" value="(Trans)glycosidases"/>
    <property type="match status" value="1"/>
</dbReference>
<dbReference type="PROSITE" id="PS00022">
    <property type="entry name" value="EGF_1"/>
    <property type="match status" value="1"/>
</dbReference>
<dbReference type="PROSITE" id="PS01186">
    <property type="entry name" value="EGF_2"/>
    <property type="match status" value="1"/>
</dbReference>
<reference key="1">
    <citation type="journal article" date="2007" name="Gene">
        <title>Identification of cDNAs encoding viper venom hyaluronidases: cross-generic sequence conservation of full-length and unusually short variant transcripts.</title>
        <authorList>
            <person name="Harrison R.A."/>
            <person name="Ibison F."/>
            <person name="Wilbraham D."/>
            <person name="Wagstaff S.C."/>
        </authorList>
    </citation>
    <scope>NUCLEOTIDE SEQUENCE [MRNA]</scope>
    <source>
        <tissue>Venom gland</tissue>
    </source>
</reference>